<keyword id="KW-0027">Amidation</keyword>
<keyword id="KW-0878">Amphibian defense peptide</keyword>
<keyword id="KW-0903">Direct protein sequencing</keyword>
<keyword id="KW-0964">Secreted</keyword>
<comment type="subcellular location">
    <subcellularLocation>
        <location evidence="1">Secreted</location>
    </subcellularLocation>
</comment>
<comment type="tissue specificity">
    <text evidence="1">Expressed by the skin glands.</text>
</comment>
<comment type="mass spectrometry"/>
<comment type="similarity">
    <text evidence="3">Belongs to the frog skin active peptide (FSAP) family. Tryptophillin subfamily.</text>
</comment>
<evidence type="ECO:0000269" key="1">
    <source>
    </source>
</evidence>
<evidence type="ECO:0000303" key="2">
    <source>
    </source>
</evidence>
<evidence type="ECO:0000305" key="3"/>
<organism>
    <name type="scientific">Pithecopus azureus</name>
    <name type="common">Orange-legged monkey tree frog</name>
    <name type="synonym">Phyllomedusa azurea</name>
    <dbReference type="NCBI Taxonomy" id="2034991"/>
    <lineage>
        <taxon>Eukaryota</taxon>
        <taxon>Metazoa</taxon>
        <taxon>Chordata</taxon>
        <taxon>Craniata</taxon>
        <taxon>Vertebrata</taxon>
        <taxon>Euteleostomi</taxon>
        <taxon>Amphibia</taxon>
        <taxon>Batrachia</taxon>
        <taxon>Anura</taxon>
        <taxon>Neobatrachia</taxon>
        <taxon>Hyloidea</taxon>
        <taxon>Hylidae</taxon>
        <taxon>Phyllomedusinae</taxon>
        <taxon>Pithecopus</taxon>
    </lineage>
</organism>
<protein>
    <recommendedName>
        <fullName evidence="2">Tryptophyllin-T2-8</fullName>
        <shortName evidence="2">Pha-T2-8</shortName>
    </recommendedName>
    <alternativeName>
        <fullName evidence="2">Tryptophyllin-12</fullName>
    </alternativeName>
</protein>
<feature type="peptide" id="PRO_0000250420" description="Tryptophyllin-T2-8" evidence="1">
    <location>
        <begin position="1"/>
        <end position="6"/>
    </location>
</feature>
<feature type="modified residue" description="Glutamic acid 1-amide" evidence="1">
    <location>
        <position position="6"/>
    </location>
</feature>
<dbReference type="GO" id="GO:0005576">
    <property type="term" value="C:extracellular region"/>
    <property type="evidence" value="ECO:0007669"/>
    <property type="project" value="UniProtKB-SubCell"/>
</dbReference>
<dbReference type="GO" id="GO:0006952">
    <property type="term" value="P:defense response"/>
    <property type="evidence" value="ECO:0007669"/>
    <property type="project" value="UniProtKB-KW"/>
</dbReference>
<name>TY28_PITAZ</name>
<reference evidence="3" key="1">
    <citation type="journal article" date="2007" name="J. Proteome Res.">
        <title>Amphibian skin secretomics: application of parallel quadrupole time-of-flight mass spectrometry and peptide precursor cDNA cloning to rapidly characterize the skin secretory peptidome of Phyllomedusa hypochondrialis azurea: discovery of a novel peptide family, the hyposins.</title>
        <authorList>
            <person name="Thompson A.H."/>
            <person name="Bjourson A.J."/>
            <person name="Orr D.F."/>
            <person name="Shaw C."/>
            <person name="McClean S."/>
        </authorList>
    </citation>
    <scope>PROTEIN SEQUENCE</scope>
    <scope>SUBCELLULAR LOCATION</scope>
    <scope>TISSUE SPECIFICITY</scope>
    <scope>MASS SPECTROMETRY</scope>
    <scope>AMIDATION AT GLU-6</scope>
    <source>
        <tissue evidence="1">Skin secretion</tissue>
    </source>
</reference>
<proteinExistence type="evidence at protein level"/>
<sequence>KPWERE</sequence>
<accession>P84953</accession>